<protein>
    <recommendedName>
        <fullName>UPF0047 protein MT2633</fullName>
    </recommendedName>
</protein>
<proteinExistence type="inferred from homology"/>
<name>Y2556_MYCTO</name>
<reference key="1">
    <citation type="journal article" date="2002" name="J. Bacteriol.">
        <title>Whole-genome comparison of Mycobacterium tuberculosis clinical and laboratory strains.</title>
        <authorList>
            <person name="Fleischmann R.D."/>
            <person name="Alland D."/>
            <person name="Eisen J.A."/>
            <person name="Carpenter L."/>
            <person name="White O."/>
            <person name="Peterson J.D."/>
            <person name="DeBoy R.T."/>
            <person name="Dodson R.J."/>
            <person name="Gwinn M.L."/>
            <person name="Haft D.H."/>
            <person name="Hickey E.K."/>
            <person name="Kolonay J.F."/>
            <person name="Nelson W.C."/>
            <person name="Umayam L.A."/>
            <person name="Ermolaeva M.D."/>
            <person name="Salzberg S.L."/>
            <person name="Delcher A."/>
            <person name="Utterback T.R."/>
            <person name="Weidman J.F."/>
            <person name="Khouri H.M."/>
            <person name="Gill J."/>
            <person name="Mikula A."/>
            <person name="Bishai W."/>
            <person name="Jacobs W.R. Jr."/>
            <person name="Venter J.C."/>
            <person name="Fraser C.M."/>
        </authorList>
    </citation>
    <scope>NUCLEOTIDE SEQUENCE [LARGE SCALE GENOMIC DNA]</scope>
    <source>
        <strain>CDC 1551 / Oshkosh</strain>
    </source>
</reference>
<dbReference type="EMBL" id="AE000516">
    <property type="protein sequence ID" value="AAK46945.1"/>
    <property type="molecule type" value="Genomic_DNA"/>
</dbReference>
<dbReference type="PIR" id="H70727">
    <property type="entry name" value="H70727"/>
</dbReference>
<dbReference type="RefSeq" id="WP_003413208.1">
    <property type="nucleotide sequence ID" value="NZ_KK341227.1"/>
</dbReference>
<dbReference type="SMR" id="P9WFP8"/>
<dbReference type="KEGG" id="mtc:MT2633"/>
<dbReference type="PATRIC" id="fig|83331.31.peg.2839"/>
<dbReference type="HOGENOM" id="CLU_096980_1_0_11"/>
<dbReference type="Proteomes" id="UP000001020">
    <property type="component" value="Chromosome"/>
</dbReference>
<dbReference type="FunFam" id="2.60.120.460:FF:000001">
    <property type="entry name" value="UPF0047 protein MT2633"/>
    <property type="match status" value="1"/>
</dbReference>
<dbReference type="Gene3D" id="2.60.120.460">
    <property type="entry name" value="YjbQ-like"/>
    <property type="match status" value="1"/>
</dbReference>
<dbReference type="InterPro" id="IPR001602">
    <property type="entry name" value="UPF0047_YjbQ-like"/>
</dbReference>
<dbReference type="InterPro" id="IPR035917">
    <property type="entry name" value="YjbQ-like_sf"/>
</dbReference>
<dbReference type="NCBIfam" id="TIGR00149">
    <property type="entry name" value="TIGR00149_YjbQ"/>
    <property type="match status" value="1"/>
</dbReference>
<dbReference type="PANTHER" id="PTHR30615">
    <property type="entry name" value="UNCHARACTERIZED PROTEIN YJBQ-RELATED"/>
    <property type="match status" value="1"/>
</dbReference>
<dbReference type="PANTHER" id="PTHR30615:SF8">
    <property type="entry name" value="UPF0047 PROTEIN C4A8.02C"/>
    <property type="match status" value="1"/>
</dbReference>
<dbReference type="Pfam" id="PF01894">
    <property type="entry name" value="UPF0047"/>
    <property type="match status" value="1"/>
</dbReference>
<dbReference type="PIRSF" id="PIRSF004681">
    <property type="entry name" value="UCP004681"/>
    <property type="match status" value="1"/>
</dbReference>
<dbReference type="SUPFAM" id="SSF111038">
    <property type="entry name" value="YjbQ-like"/>
    <property type="match status" value="1"/>
</dbReference>
<dbReference type="PROSITE" id="PS01314">
    <property type="entry name" value="UPF0047"/>
    <property type="match status" value="1"/>
</dbReference>
<sequence>MLDVDTARRRIVDLTDAVRAFCTAHDDGLCNVFVPHATAGVAIIETGAGSDEDLVDTLVRLLPRDDRYRHAHGSYGHGADHLLPAFVAPSVTVPVSGGQPLLGTWQSIVLVDLNQDNPRRSVRLSFVEG</sequence>
<evidence type="ECO:0000305" key="1"/>
<comment type="similarity">
    <text evidence="1">Belongs to the UPF0047 family.</text>
</comment>
<keyword id="KW-1185">Reference proteome</keyword>
<accession>P9WFP8</accession>
<accession>L0TCV5</accession>
<accession>P67121</accession>
<accession>Q50742</accession>
<organism>
    <name type="scientific">Mycobacterium tuberculosis (strain CDC 1551 / Oshkosh)</name>
    <dbReference type="NCBI Taxonomy" id="83331"/>
    <lineage>
        <taxon>Bacteria</taxon>
        <taxon>Bacillati</taxon>
        <taxon>Actinomycetota</taxon>
        <taxon>Actinomycetes</taxon>
        <taxon>Mycobacteriales</taxon>
        <taxon>Mycobacteriaceae</taxon>
        <taxon>Mycobacterium</taxon>
        <taxon>Mycobacterium tuberculosis complex</taxon>
    </lineage>
</organism>
<gene>
    <name type="ordered locus">MT2633</name>
</gene>
<feature type="chain" id="PRO_0000428499" description="UPF0047 protein MT2633">
    <location>
        <begin position="1"/>
        <end position="129"/>
    </location>
</feature>